<organism>
    <name type="scientific">Burkholderia pseudomallei (strain 1106a)</name>
    <dbReference type="NCBI Taxonomy" id="357348"/>
    <lineage>
        <taxon>Bacteria</taxon>
        <taxon>Pseudomonadati</taxon>
        <taxon>Pseudomonadota</taxon>
        <taxon>Betaproteobacteria</taxon>
        <taxon>Burkholderiales</taxon>
        <taxon>Burkholderiaceae</taxon>
        <taxon>Burkholderia</taxon>
        <taxon>pseudomallei group</taxon>
    </lineage>
</organism>
<sequence length="119" mass="13644">MPRVKRGVTARARHKKIINLAKGYRGRRNNVYRIAKQAVMRAGQYAYRDRRNKKRVFRALWITRINAAVRQHDMTYSVFINGLKKASIELDRKVLADMAVFDKAAFAAIVKQVKAAVAA</sequence>
<evidence type="ECO:0000255" key="1">
    <source>
        <dbReference type="HAMAP-Rule" id="MF_00382"/>
    </source>
</evidence>
<evidence type="ECO:0000305" key="2"/>
<comment type="function">
    <text evidence="1">Binds directly to 23S ribosomal RNA and is necessary for the in vitro assembly process of the 50S ribosomal subunit. It is not involved in the protein synthesizing functions of that subunit.</text>
</comment>
<comment type="similarity">
    <text evidence="1">Belongs to the bacterial ribosomal protein bL20 family.</text>
</comment>
<protein>
    <recommendedName>
        <fullName evidence="1">Large ribosomal subunit protein bL20</fullName>
    </recommendedName>
    <alternativeName>
        <fullName evidence="2">50S ribosomal protein L20</fullName>
    </alternativeName>
</protein>
<feature type="chain" id="PRO_1000048942" description="Large ribosomal subunit protein bL20">
    <location>
        <begin position="1"/>
        <end position="119"/>
    </location>
</feature>
<keyword id="KW-0687">Ribonucleoprotein</keyword>
<keyword id="KW-0689">Ribosomal protein</keyword>
<keyword id="KW-0694">RNA-binding</keyword>
<keyword id="KW-0699">rRNA-binding</keyword>
<reference key="1">
    <citation type="journal article" date="2010" name="Genome Biol. Evol.">
        <title>Continuing evolution of Burkholderia mallei through genome reduction and large-scale rearrangements.</title>
        <authorList>
            <person name="Losada L."/>
            <person name="Ronning C.M."/>
            <person name="DeShazer D."/>
            <person name="Woods D."/>
            <person name="Fedorova N."/>
            <person name="Kim H.S."/>
            <person name="Shabalina S.A."/>
            <person name="Pearson T.R."/>
            <person name="Brinkac L."/>
            <person name="Tan P."/>
            <person name="Nandi T."/>
            <person name="Crabtree J."/>
            <person name="Badger J."/>
            <person name="Beckstrom-Sternberg S."/>
            <person name="Saqib M."/>
            <person name="Schutzer S.E."/>
            <person name="Keim P."/>
            <person name="Nierman W.C."/>
        </authorList>
    </citation>
    <scope>NUCLEOTIDE SEQUENCE [LARGE SCALE GENOMIC DNA]</scope>
    <source>
        <strain>1106a</strain>
    </source>
</reference>
<dbReference type="EMBL" id="CP000572">
    <property type="protein sequence ID" value="ABN92586.1"/>
    <property type="molecule type" value="Genomic_DNA"/>
</dbReference>
<dbReference type="RefSeq" id="WP_004192938.1">
    <property type="nucleotide sequence ID" value="NC_009076.1"/>
</dbReference>
<dbReference type="SMR" id="A3NUI7"/>
<dbReference type="GeneID" id="98102114"/>
<dbReference type="KEGG" id="bpl:BURPS1106A_1738"/>
<dbReference type="HOGENOM" id="CLU_123265_0_1_4"/>
<dbReference type="Proteomes" id="UP000006738">
    <property type="component" value="Chromosome I"/>
</dbReference>
<dbReference type="GO" id="GO:1990904">
    <property type="term" value="C:ribonucleoprotein complex"/>
    <property type="evidence" value="ECO:0007669"/>
    <property type="project" value="UniProtKB-KW"/>
</dbReference>
<dbReference type="GO" id="GO:0005840">
    <property type="term" value="C:ribosome"/>
    <property type="evidence" value="ECO:0007669"/>
    <property type="project" value="UniProtKB-KW"/>
</dbReference>
<dbReference type="GO" id="GO:0019843">
    <property type="term" value="F:rRNA binding"/>
    <property type="evidence" value="ECO:0007669"/>
    <property type="project" value="UniProtKB-UniRule"/>
</dbReference>
<dbReference type="GO" id="GO:0003735">
    <property type="term" value="F:structural constituent of ribosome"/>
    <property type="evidence" value="ECO:0007669"/>
    <property type="project" value="InterPro"/>
</dbReference>
<dbReference type="GO" id="GO:0000027">
    <property type="term" value="P:ribosomal large subunit assembly"/>
    <property type="evidence" value="ECO:0007669"/>
    <property type="project" value="UniProtKB-UniRule"/>
</dbReference>
<dbReference type="GO" id="GO:0006412">
    <property type="term" value="P:translation"/>
    <property type="evidence" value="ECO:0007669"/>
    <property type="project" value="InterPro"/>
</dbReference>
<dbReference type="CDD" id="cd07026">
    <property type="entry name" value="Ribosomal_L20"/>
    <property type="match status" value="1"/>
</dbReference>
<dbReference type="FunFam" id="1.10.1900.20:FF:000001">
    <property type="entry name" value="50S ribosomal protein L20"/>
    <property type="match status" value="1"/>
</dbReference>
<dbReference type="Gene3D" id="6.10.160.10">
    <property type="match status" value="1"/>
</dbReference>
<dbReference type="Gene3D" id="1.10.1900.20">
    <property type="entry name" value="Ribosomal protein L20"/>
    <property type="match status" value="1"/>
</dbReference>
<dbReference type="HAMAP" id="MF_00382">
    <property type="entry name" value="Ribosomal_bL20"/>
    <property type="match status" value="1"/>
</dbReference>
<dbReference type="InterPro" id="IPR005813">
    <property type="entry name" value="Ribosomal_bL20"/>
</dbReference>
<dbReference type="InterPro" id="IPR049946">
    <property type="entry name" value="RIBOSOMAL_L20_CS"/>
</dbReference>
<dbReference type="InterPro" id="IPR035566">
    <property type="entry name" value="Ribosomal_protein_bL20_C"/>
</dbReference>
<dbReference type="NCBIfam" id="TIGR01032">
    <property type="entry name" value="rplT_bact"/>
    <property type="match status" value="1"/>
</dbReference>
<dbReference type="PANTHER" id="PTHR10986">
    <property type="entry name" value="39S RIBOSOMAL PROTEIN L20"/>
    <property type="match status" value="1"/>
</dbReference>
<dbReference type="Pfam" id="PF00453">
    <property type="entry name" value="Ribosomal_L20"/>
    <property type="match status" value="1"/>
</dbReference>
<dbReference type="PRINTS" id="PR00062">
    <property type="entry name" value="RIBOSOMALL20"/>
</dbReference>
<dbReference type="SUPFAM" id="SSF74731">
    <property type="entry name" value="Ribosomal protein L20"/>
    <property type="match status" value="1"/>
</dbReference>
<dbReference type="PROSITE" id="PS00937">
    <property type="entry name" value="RIBOSOMAL_L20"/>
    <property type="match status" value="1"/>
</dbReference>
<name>RL20_BURP0</name>
<gene>
    <name evidence="1" type="primary">rplT</name>
    <name type="ordered locus">BURPS1106A_1738</name>
</gene>
<accession>A3NUI7</accession>
<proteinExistence type="inferred from homology"/>